<proteinExistence type="inferred from homology"/>
<sequence>MPHSWDYDAVVIGSGPGGEGAAMGLVKQGARVAVIERYHNVGGGCTHWGTIPSKALRHAVSRIIEFNQNPLYSDHSRLLRSSFADILNHADNVINQQTRMRQGFYERNHCEILQGNAHFIDEHTLALECHDGTVETLTAEKFVIACGSRPYHPNDVDFSHPRIYDSDSILSLHHEPRHVIIYGAGVIGCEYASIFRGMDVKVDLINTRDRLLAFLDQEMSDSLSYHFWNSGVVIRHNEEYEKIEGCDDGVIMHLKSGKKLKADCLLYANGRTGNTDSLALENIGLETDSRGQLKVNSMYQTALPHVYAVGDVIGYPSLASAAYDQGRIAAQALVKGEATAHLIEDIPTGIYTIPEISSVGKTEQQLTAMKVPYEVGRAQFKHLARAQIVGMNVGTLKILFHRETKEILGIHCFGERAAEIIHIGQAIMEQKGGGNTIEYFVNTTFNYPTMAEAYRVAALNGLNRLF</sequence>
<keyword id="KW-0963">Cytoplasm</keyword>
<keyword id="KW-0274">FAD</keyword>
<keyword id="KW-0285">Flavoprotein</keyword>
<keyword id="KW-0520">NAD</keyword>
<keyword id="KW-0521">NADP</keyword>
<keyword id="KW-0560">Oxidoreductase</keyword>
<dbReference type="EC" id="1.6.1.1" evidence="1"/>
<dbReference type="EMBL" id="CP000886">
    <property type="protein sequence ID" value="ABX70401.1"/>
    <property type="molecule type" value="Genomic_DNA"/>
</dbReference>
<dbReference type="RefSeq" id="WP_001120789.1">
    <property type="nucleotide sequence ID" value="NC_010102.1"/>
</dbReference>
<dbReference type="SMR" id="A9N0H2"/>
<dbReference type="GeneID" id="66758375"/>
<dbReference type="KEGG" id="spq:SPAB_05111"/>
<dbReference type="PATRIC" id="fig|1016998.12.peg.4796"/>
<dbReference type="HOGENOM" id="CLU_016755_0_0_6"/>
<dbReference type="BioCyc" id="SENT1016998:SPAB_RS20795-MONOMER"/>
<dbReference type="Proteomes" id="UP000008556">
    <property type="component" value="Chromosome"/>
</dbReference>
<dbReference type="GO" id="GO:0005829">
    <property type="term" value="C:cytosol"/>
    <property type="evidence" value="ECO:0007669"/>
    <property type="project" value="TreeGrafter"/>
</dbReference>
<dbReference type="GO" id="GO:0004148">
    <property type="term" value="F:dihydrolipoyl dehydrogenase (NADH) activity"/>
    <property type="evidence" value="ECO:0007669"/>
    <property type="project" value="TreeGrafter"/>
</dbReference>
<dbReference type="GO" id="GO:0050660">
    <property type="term" value="F:flavin adenine dinucleotide binding"/>
    <property type="evidence" value="ECO:0007669"/>
    <property type="project" value="TreeGrafter"/>
</dbReference>
<dbReference type="GO" id="GO:0003957">
    <property type="term" value="F:NAD(P)+ transhydrogenase (Si-specific) activity"/>
    <property type="evidence" value="ECO:0007669"/>
    <property type="project" value="UniProtKB-UniRule"/>
</dbReference>
<dbReference type="GO" id="GO:0006103">
    <property type="term" value="P:2-oxoglutarate metabolic process"/>
    <property type="evidence" value="ECO:0007669"/>
    <property type="project" value="TreeGrafter"/>
</dbReference>
<dbReference type="GO" id="GO:0006739">
    <property type="term" value="P:NADP metabolic process"/>
    <property type="evidence" value="ECO:0007669"/>
    <property type="project" value="UniProtKB-UniRule"/>
</dbReference>
<dbReference type="FunFam" id="3.30.390.30:FF:000002">
    <property type="entry name" value="Soluble pyridine nucleotide transhydrogenase"/>
    <property type="match status" value="1"/>
</dbReference>
<dbReference type="FunFam" id="3.50.50.60:FF:000008">
    <property type="entry name" value="Soluble pyridine nucleotide transhydrogenase"/>
    <property type="match status" value="1"/>
</dbReference>
<dbReference type="Gene3D" id="3.30.390.30">
    <property type="match status" value="1"/>
</dbReference>
<dbReference type="Gene3D" id="3.50.50.60">
    <property type="entry name" value="FAD/NAD(P)-binding domain"/>
    <property type="match status" value="2"/>
</dbReference>
<dbReference type="HAMAP" id="MF_00247">
    <property type="entry name" value="SthA"/>
    <property type="match status" value="1"/>
</dbReference>
<dbReference type="InterPro" id="IPR050151">
    <property type="entry name" value="Class-I_Pyr_Nuc-Dis_Oxidored"/>
</dbReference>
<dbReference type="InterPro" id="IPR036188">
    <property type="entry name" value="FAD/NAD-bd_sf"/>
</dbReference>
<dbReference type="InterPro" id="IPR023753">
    <property type="entry name" value="FAD/NAD-binding_dom"/>
</dbReference>
<dbReference type="InterPro" id="IPR016156">
    <property type="entry name" value="FAD/NAD-linked_Rdtase_dimer_sf"/>
</dbReference>
<dbReference type="InterPro" id="IPR001100">
    <property type="entry name" value="Pyr_nuc-diS_OxRdtase"/>
</dbReference>
<dbReference type="InterPro" id="IPR004099">
    <property type="entry name" value="Pyr_nucl-diS_OxRdtase_dimer"/>
</dbReference>
<dbReference type="InterPro" id="IPR022962">
    <property type="entry name" value="STH_gammaproteobact"/>
</dbReference>
<dbReference type="NCBIfam" id="NF003585">
    <property type="entry name" value="PRK05249.1"/>
    <property type="match status" value="1"/>
</dbReference>
<dbReference type="PANTHER" id="PTHR22912">
    <property type="entry name" value="DISULFIDE OXIDOREDUCTASE"/>
    <property type="match status" value="1"/>
</dbReference>
<dbReference type="PANTHER" id="PTHR22912:SF93">
    <property type="entry name" value="SOLUBLE PYRIDINE NUCLEOTIDE TRANSHYDROGENASE"/>
    <property type="match status" value="1"/>
</dbReference>
<dbReference type="Pfam" id="PF07992">
    <property type="entry name" value="Pyr_redox_2"/>
    <property type="match status" value="1"/>
</dbReference>
<dbReference type="Pfam" id="PF02852">
    <property type="entry name" value="Pyr_redox_dim"/>
    <property type="match status" value="1"/>
</dbReference>
<dbReference type="PIRSF" id="PIRSF000350">
    <property type="entry name" value="Mercury_reductase_MerA"/>
    <property type="match status" value="1"/>
</dbReference>
<dbReference type="PRINTS" id="PR00368">
    <property type="entry name" value="FADPNR"/>
</dbReference>
<dbReference type="PRINTS" id="PR00411">
    <property type="entry name" value="PNDRDTASEI"/>
</dbReference>
<dbReference type="SUPFAM" id="SSF51905">
    <property type="entry name" value="FAD/NAD(P)-binding domain"/>
    <property type="match status" value="1"/>
</dbReference>
<dbReference type="SUPFAM" id="SSF55424">
    <property type="entry name" value="FAD/NAD-linked reductases, dimerisation (C-terminal) domain"/>
    <property type="match status" value="1"/>
</dbReference>
<gene>
    <name evidence="1" type="primary">sthA</name>
    <name evidence="1" type="synonym">udhA</name>
    <name type="ordered locus">SPAB_05111</name>
</gene>
<feature type="chain" id="PRO_1000078413" description="Soluble pyridine nucleotide transhydrogenase">
    <location>
        <begin position="1"/>
        <end position="466"/>
    </location>
</feature>
<feature type="binding site" evidence="1">
    <location>
        <begin position="36"/>
        <end position="45"/>
    </location>
    <ligand>
        <name>FAD</name>
        <dbReference type="ChEBI" id="CHEBI:57692"/>
    </ligand>
</feature>
<name>STHA_SALPB</name>
<accession>A9N0H2</accession>
<evidence type="ECO:0000255" key="1">
    <source>
        <dbReference type="HAMAP-Rule" id="MF_00247"/>
    </source>
</evidence>
<comment type="function">
    <text evidence="1">Conversion of NADPH, generated by peripheral catabolic pathways, to NADH, which can enter the respiratory chain for energy generation.</text>
</comment>
<comment type="catalytic activity">
    <reaction evidence="1">
        <text>NAD(+) + NADPH = NADH + NADP(+)</text>
        <dbReference type="Rhea" id="RHEA:11692"/>
        <dbReference type="ChEBI" id="CHEBI:57540"/>
        <dbReference type="ChEBI" id="CHEBI:57783"/>
        <dbReference type="ChEBI" id="CHEBI:57945"/>
        <dbReference type="ChEBI" id="CHEBI:58349"/>
        <dbReference type="EC" id="1.6.1.1"/>
    </reaction>
</comment>
<comment type="cofactor">
    <cofactor evidence="1">
        <name>FAD</name>
        <dbReference type="ChEBI" id="CHEBI:57692"/>
    </cofactor>
    <text evidence="1">Binds 1 FAD per subunit.</text>
</comment>
<comment type="subcellular location">
    <subcellularLocation>
        <location evidence="1">Cytoplasm</location>
    </subcellularLocation>
</comment>
<comment type="similarity">
    <text evidence="1">Belongs to the class-I pyridine nucleotide-disulfide oxidoreductase family.</text>
</comment>
<organism>
    <name type="scientific">Salmonella paratyphi B (strain ATCC BAA-1250 / SPB7)</name>
    <dbReference type="NCBI Taxonomy" id="1016998"/>
    <lineage>
        <taxon>Bacteria</taxon>
        <taxon>Pseudomonadati</taxon>
        <taxon>Pseudomonadota</taxon>
        <taxon>Gammaproteobacteria</taxon>
        <taxon>Enterobacterales</taxon>
        <taxon>Enterobacteriaceae</taxon>
        <taxon>Salmonella</taxon>
    </lineage>
</organism>
<protein>
    <recommendedName>
        <fullName evidence="1">Soluble pyridine nucleotide transhydrogenase</fullName>
        <shortName evidence="1">STH</shortName>
        <ecNumber evidence="1">1.6.1.1</ecNumber>
    </recommendedName>
    <alternativeName>
        <fullName evidence="1">NAD(P)(+) transhydrogenase [B-specific]</fullName>
    </alternativeName>
</protein>
<reference key="1">
    <citation type="submission" date="2007-11" db="EMBL/GenBank/DDBJ databases">
        <authorList>
            <consortium name="The Salmonella enterica serovar Paratyphi B Genome Sequencing Project"/>
            <person name="McClelland M."/>
            <person name="Sanderson E.K."/>
            <person name="Porwollik S."/>
            <person name="Spieth J."/>
            <person name="Clifton W.S."/>
            <person name="Fulton R."/>
            <person name="Cordes M."/>
            <person name="Wollam A."/>
            <person name="Shah N."/>
            <person name="Pepin K."/>
            <person name="Bhonagiri V."/>
            <person name="Nash W."/>
            <person name="Johnson M."/>
            <person name="Thiruvilangam P."/>
            <person name="Wilson R."/>
        </authorList>
    </citation>
    <scope>NUCLEOTIDE SEQUENCE [LARGE SCALE GENOMIC DNA]</scope>
    <source>
        <strain>ATCC BAA-1250 / SPB7</strain>
    </source>
</reference>